<feature type="signal peptide" evidence="2">
    <location>
        <begin position="1"/>
        <end position="18"/>
    </location>
</feature>
<feature type="chain" id="PRO_5007661161" description="Proapolipoprotein A-II">
    <location>
        <begin position="19"/>
        <end position="101"/>
    </location>
</feature>
<feature type="chain" id="PRO_0000450127" description="Apolipoprotein A-II">
    <location>
        <begin position="24"/>
        <end position="101"/>
    </location>
</feature>
<feature type="chain" id="PRO_0000450128" description="Truncated apolipoprotein A-II" evidence="1">
    <location>
        <begin position="24"/>
        <end position="100"/>
    </location>
</feature>
<feature type="modified residue" description="Pyrrolidone carboxylic acid" evidence="1">
    <location>
        <position position="24"/>
    </location>
</feature>
<keyword id="KW-0165">Cleavage on pair of basic residues</keyword>
<keyword id="KW-0345">HDL</keyword>
<keyword id="KW-0445">Lipid transport</keyword>
<keyword id="KW-0558">Oxidation</keyword>
<keyword id="KW-0597">Phosphoprotein</keyword>
<keyword id="KW-0873">Pyrrolidone carboxylic acid</keyword>
<keyword id="KW-1185">Reference proteome</keyword>
<keyword id="KW-0964">Secreted</keyword>
<keyword id="KW-0732">Signal</keyword>
<keyword id="KW-0813">Transport</keyword>
<name>APOA2_HETGA</name>
<proteinExistence type="inferred from homology"/>
<accession>G5BWH8</accession>
<protein>
    <recommendedName>
        <fullName>Apolipoprotein A-II</fullName>
        <shortName>Apo-AII</shortName>
        <shortName>ApoA-II</shortName>
    </recommendedName>
    <alternativeName>
        <fullName>Apolipoprotein A2</fullName>
    </alternativeName>
    <component>
        <recommendedName>
            <fullName>Proapolipoprotein A-II</fullName>
            <shortName>ProapoA-II</shortName>
        </recommendedName>
    </component>
    <component>
        <recommendedName>
            <fullName>Truncated apolipoprotein A-II</fullName>
        </recommendedName>
    </component>
</protein>
<evidence type="ECO:0000250" key="1">
    <source>
        <dbReference type="UniProtKB" id="P02652"/>
    </source>
</evidence>
<evidence type="ECO:0000255" key="2"/>
<evidence type="ECO:0000305" key="3"/>
<comment type="function">
    <text>May stabilize HDL (high density lipoprotein) structure by its association with lipids, and affect the HDL metabolism.</text>
</comment>
<comment type="subunit">
    <text evidence="1">Monomer. Interacts with NAXE and NDRG1 (By similarity).</text>
</comment>
<comment type="subcellular location">
    <subcellularLocation>
        <location evidence="1">Secreted</location>
    </subcellularLocation>
</comment>
<comment type="similarity">
    <text evidence="3">Belongs to the apolipoprotein A2 family.</text>
</comment>
<dbReference type="EMBL" id="GEBF01000010">
    <property type="protein sequence ID" value="JAO03623.1"/>
    <property type="molecule type" value="Transcribed_RNA"/>
</dbReference>
<dbReference type="EMBL" id="JH172217">
    <property type="protein sequence ID" value="EHB13639.1"/>
    <property type="molecule type" value="Genomic_DNA"/>
</dbReference>
<dbReference type="RefSeq" id="XP_004858718.1">
    <property type="nucleotide sequence ID" value="XM_004858661.2"/>
</dbReference>
<dbReference type="SMR" id="G5BWH8"/>
<dbReference type="FunCoup" id="G5BWH8">
    <property type="interactions" value="189"/>
</dbReference>
<dbReference type="STRING" id="10181.G5BWH8"/>
<dbReference type="Ensembl" id="ENSHGLT00000026848">
    <property type="protein sequence ID" value="ENSHGLP00000026611"/>
    <property type="gene ID" value="ENSHGLG00000018928"/>
</dbReference>
<dbReference type="GeneID" id="101701317"/>
<dbReference type="KEGG" id="hgl:101701317"/>
<dbReference type="CTD" id="336"/>
<dbReference type="eggNOG" id="ENOG502SVYZ">
    <property type="taxonomic scope" value="Eukaryota"/>
</dbReference>
<dbReference type="InParanoid" id="G5BWH8"/>
<dbReference type="OMA" id="LTICSFE"/>
<dbReference type="OrthoDB" id="9450770at2759"/>
<dbReference type="Proteomes" id="UP000006813">
    <property type="component" value="Unassembled WGS sequence"/>
</dbReference>
<dbReference type="Proteomes" id="UP000694906">
    <property type="component" value="Unplaced"/>
</dbReference>
<dbReference type="Bgee" id="ENSHGLG00000018928">
    <property type="expression patterns" value="Expressed in liver and 3 other cell types or tissues"/>
</dbReference>
<dbReference type="GO" id="GO:0042627">
    <property type="term" value="C:chylomicron"/>
    <property type="evidence" value="ECO:0007669"/>
    <property type="project" value="Ensembl"/>
</dbReference>
<dbReference type="GO" id="GO:0034366">
    <property type="term" value="C:spherical high-density lipoprotein particle"/>
    <property type="evidence" value="ECO:0007669"/>
    <property type="project" value="Ensembl"/>
</dbReference>
<dbReference type="GO" id="GO:0034361">
    <property type="term" value="C:very-low-density lipoprotein particle"/>
    <property type="evidence" value="ECO:0007669"/>
    <property type="project" value="Ensembl"/>
</dbReference>
<dbReference type="GO" id="GO:0034190">
    <property type="term" value="F:apolipoprotein receptor binding"/>
    <property type="evidence" value="ECO:0007669"/>
    <property type="project" value="Ensembl"/>
</dbReference>
<dbReference type="GO" id="GO:0015485">
    <property type="term" value="F:cholesterol binding"/>
    <property type="evidence" value="ECO:0007669"/>
    <property type="project" value="Ensembl"/>
</dbReference>
<dbReference type="GO" id="GO:0120020">
    <property type="term" value="F:cholesterol transfer activity"/>
    <property type="evidence" value="ECO:0007669"/>
    <property type="project" value="Ensembl"/>
</dbReference>
<dbReference type="GO" id="GO:0019899">
    <property type="term" value="F:enzyme binding"/>
    <property type="evidence" value="ECO:0007669"/>
    <property type="project" value="Ensembl"/>
</dbReference>
<dbReference type="GO" id="GO:0031072">
    <property type="term" value="F:heat shock protein binding"/>
    <property type="evidence" value="ECO:0007669"/>
    <property type="project" value="Ensembl"/>
</dbReference>
<dbReference type="GO" id="GO:0008035">
    <property type="term" value="F:high-density lipoprotein particle binding"/>
    <property type="evidence" value="ECO:0007669"/>
    <property type="project" value="Ensembl"/>
</dbReference>
<dbReference type="GO" id="GO:0070653">
    <property type="term" value="F:high-density lipoprotein particle receptor binding"/>
    <property type="evidence" value="ECO:0007669"/>
    <property type="project" value="Ensembl"/>
</dbReference>
<dbReference type="GO" id="GO:0055102">
    <property type="term" value="F:lipase inhibitor activity"/>
    <property type="evidence" value="ECO:0007669"/>
    <property type="project" value="Ensembl"/>
</dbReference>
<dbReference type="GO" id="GO:0031210">
    <property type="term" value="F:phosphatidylcholine binding"/>
    <property type="evidence" value="ECO:0007669"/>
    <property type="project" value="Ensembl"/>
</dbReference>
<dbReference type="GO" id="GO:0060228">
    <property type="term" value="F:phosphatidylcholine-sterol O-acyltransferase activator activity"/>
    <property type="evidence" value="ECO:0007669"/>
    <property type="project" value="Ensembl"/>
</dbReference>
<dbReference type="GO" id="GO:0046982">
    <property type="term" value="F:protein heterodimerization activity"/>
    <property type="evidence" value="ECO:0007669"/>
    <property type="project" value="Ensembl"/>
</dbReference>
<dbReference type="GO" id="GO:0042803">
    <property type="term" value="F:protein homodimerization activity"/>
    <property type="evidence" value="ECO:0007669"/>
    <property type="project" value="Ensembl"/>
</dbReference>
<dbReference type="GO" id="GO:0048018">
    <property type="term" value="F:receptor ligand activity"/>
    <property type="evidence" value="ECO:0007669"/>
    <property type="project" value="Ensembl"/>
</dbReference>
<dbReference type="GO" id="GO:0071402">
    <property type="term" value="P:cellular response to lipoprotein particle stimulus"/>
    <property type="evidence" value="ECO:0007669"/>
    <property type="project" value="Ensembl"/>
</dbReference>
<dbReference type="GO" id="GO:0033344">
    <property type="term" value="P:cholesterol efflux"/>
    <property type="evidence" value="ECO:0007669"/>
    <property type="project" value="Ensembl"/>
</dbReference>
<dbReference type="GO" id="GO:0042632">
    <property type="term" value="P:cholesterol homeostasis"/>
    <property type="evidence" value="ECO:0007669"/>
    <property type="project" value="Ensembl"/>
</dbReference>
<dbReference type="GO" id="GO:0008203">
    <property type="term" value="P:cholesterol metabolic process"/>
    <property type="evidence" value="ECO:0007669"/>
    <property type="project" value="Ensembl"/>
</dbReference>
<dbReference type="GO" id="GO:0046340">
    <property type="term" value="P:diacylglycerol catabolic process"/>
    <property type="evidence" value="ECO:0007669"/>
    <property type="project" value="Ensembl"/>
</dbReference>
<dbReference type="GO" id="GO:0034380">
    <property type="term" value="P:high-density lipoprotein particle assembly"/>
    <property type="evidence" value="ECO:0007669"/>
    <property type="project" value="Ensembl"/>
</dbReference>
<dbReference type="GO" id="GO:0034384">
    <property type="term" value="P:high-density lipoprotein particle clearance"/>
    <property type="evidence" value="ECO:0007669"/>
    <property type="project" value="Ensembl"/>
</dbReference>
<dbReference type="GO" id="GO:0034375">
    <property type="term" value="P:high-density lipoprotein particle remodeling"/>
    <property type="evidence" value="ECO:0007669"/>
    <property type="project" value="Ensembl"/>
</dbReference>
<dbReference type="GO" id="GO:0042157">
    <property type="term" value="P:lipoprotein metabolic process"/>
    <property type="evidence" value="ECO:0007669"/>
    <property type="project" value="Ensembl"/>
</dbReference>
<dbReference type="GO" id="GO:0034374">
    <property type="term" value="P:low-density lipoprotein particle remodeling"/>
    <property type="evidence" value="ECO:0007669"/>
    <property type="project" value="Ensembl"/>
</dbReference>
<dbReference type="GO" id="GO:0060621">
    <property type="term" value="P:negative regulation of cholesterol import"/>
    <property type="evidence" value="ECO:0007669"/>
    <property type="project" value="Ensembl"/>
</dbReference>
<dbReference type="GO" id="GO:0002719">
    <property type="term" value="P:negative regulation of cytokine production involved in immune response"/>
    <property type="evidence" value="ECO:0007669"/>
    <property type="project" value="Ensembl"/>
</dbReference>
<dbReference type="GO" id="GO:0050995">
    <property type="term" value="P:negative regulation of lipid catabolic process"/>
    <property type="evidence" value="ECO:0007669"/>
    <property type="project" value="Ensembl"/>
</dbReference>
<dbReference type="GO" id="GO:0010903">
    <property type="term" value="P:negative regulation of very-low-density lipoprotein particle remodeling"/>
    <property type="evidence" value="ECO:0007669"/>
    <property type="project" value="Ensembl"/>
</dbReference>
<dbReference type="GO" id="GO:0006656">
    <property type="term" value="P:phosphatidylcholine biosynthetic process"/>
    <property type="evidence" value="ECO:0007669"/>
    <property type="project" value="Ensembl"/>
</dbReference>
<dbReference type="GO" id="GO:0009395">
    <property type="term" value="P:phospholipid catabolic process"/>
    <property type="evidence" value="ECO:0007669"/>
    <property type="project" value="Ensembl"/>
</dbReference>
<dbReference type="GO" id="GO:0033700">
    <property type="term" value="P:phospholipid efflux"/>
    <property type="evidence" value="ECO:0007669"/>
    <property type="project" value="Ensembl"/>
</dbReference>
<dbReference type="GO" id="GO:0032757">
    <property type="term" value="P:positive regulation of interleukin-8 production"/>
    <property type="evidence" value="ECO:0007669"/>
    <property type="project" value="Ensembl"/>
</dbReference>
<dbReference type="GO" id="GO:0050996">
    <property type="term" value="P:positive regulation of lipid catabolic process"/>
    <property type="evidence" value="ECO:0007669"/>
    <property type="project" value="Ensembl"/>
</dbReference>
<dbReference type="GO" id="GO:0050766">
    <property type="term" value="P:positive regulation of phagocytosis"/>
    <property type="evidence" value="ECO:0007669"/>
    <property type="project" value="Ensembl"/>
</dbReference>
<dbReference type="GO" id="GO:0050821">
    <property type="term" value="P:protein stabilization"/>
    <property type="evidence" value="ECO:0007669"/>
    <property type="project" value="Ensembl"/>
</dbReference>
<dbReference type="GO" id="GO:0030300">
    <property type="term" value="P:regulation of intestinal cholesterol absorption"/>
    <property type="evidence" value="ECO:0007669"/>
    <property type="project" value="Ensembl"/>
</dbReference>
<dbReference type="GO" id="GO:0009749">
    <property type="term" value="P:response to glucose"/>
    <property type="evidence" value="ECO:0007669"/>
    <property type="project" value="Ensembl"/>
</dbReference>
<dbReference type="GO" id="GO:0043691">
    <property type="term" value="P:reverse cholesterol transport"/>
    <property type="evidence" value="ECO:0007669"/>
    <property type="project" value="Ensembl"/>
</dbReference>
<dbReference type="GO" id="GO:0034370">
    <property type="term" value="P:triglyceride-rich lipoprotein particle remodeling"/>
    <property type="evidence" value="ECO:0007669"/>
    <property type="project" value="Ensembl"/>
</dbReference>
<dbReference type="Gene3D" id="6.10.250.100">
    <property type="match status" value="1"/>
</dbReference>
<dbReference type="InterPro" id="IPR006801">
    <property type="entry name" value="ApoA-II"/>
</dbReference>
<dbReference type="InterPro" id="IPR036172">
    <property type="entry name" value="ApoA-II_sf"/>
</dbReference>
<dbReference type="PANTHER" id="PTHR11027">
    <property type="entry name" value="APOLIPOPROTEIN A-II"/>
    <property type="match status" value="1"/>
</dbReference>
<dbReference type="PANTHER" id="PTHR11027:SF0">
    <property type="entry name" value="APOLIPOPROTEIN A-II"/>
    <property type="match status" value="1"/>
</dbReference>
<dbReference type="Pfam" id="PF04711">
    <property type="entry name" value="ApoA-II"/>
    <property type="match status" value="1"/>
</dbReference>
<dbReference type="SUPFAM" id="SSF82936">
    <property type="entry name" value="Apolipoprotein A-II"/>
    <property type="match status" value="1"/>
</dbReference>
<sequence length="101" mass="11381">MKLLAMTVLLVTICSLDGALVRRQAEEPDLQGLFSQYFQTVTSYGKDLLQKTKPQDLQAQVQSYFEKTQEQLVPLVKKAGTELFNMLSNMIELKKTQPATA</sequence>
<organism>
    <name type="scientific">Heterocephalus glaber</name>
    <name type="common">Naked mole rat</name>
    <dbReference type="NCBI Taxonomy" id="10181"/>
    <lineage>
        <taxon>Eukaryota</taxon>
        <taxon>Metazoa</taxon>
        <taxon>Chordata</taxon>
        <taxon>Craniata</taxon>
        <taxon>Vertebrata</taxon>
        <taxon>Euteleostomi</taxon>
        <taxon>Mammalia</taxon>
        <taxon>Eutheria</taxon>
        <taxon>Euarchontoglires</taxon>
        <taxon>Glires</taxon>
        <taxon>Rodentia</taxon>
        <taxon>Hystricomorpha</taxon>
        <taxon>Bathyergidae</taxon>
        <taxon>Heterocephalus</taxon>
    </lineage>
</organism>
<gene>
    <name type="primary">Apoa2</name>
</gene>
<reference key="1">
    <citation type="submission" date="2015-10" db="EMBL/GenBank/DDBJ databases">
        <title>FRAMA: From RNA-seq data to annotated mRNA assemblies.</title>
        <authorList>
            <person name="Bens M."/>
            <person name="Sahm A."/>
            <person name="Jahn N."/>
            <person name="Morhart M."/>
            <person name="Holtze S."/>
            <person name="Hildebrandt T.B."/>
            <person name="Platzer M."/>
            <person name="Szafranski K."/>
        </authorList>
    </citation>
    <scope>NUCLEOTIDE SEQUENCE [MRNA]</scope>
    <source>
        <tissue>Liver</tissue>
    </source>
</reference>
<reference key="2">
    <citation type="journal article" date="2011" name="Nature">
        <title>Genome sequencing reveals insights into physiology and longevity of the naked mole rat.</title>
        <authorList>
            <person name="Kim E.B."/>
            <person name="Fang X."/>
            <person name="Fushan A.A."/>
            <person name="Huang Z."/>
            <person name="Lobanov A.V."/>
            <person name="Han L."/>
            <person name="Marino S.M."/>
            <person name="Sun X."/>
            <person name="Turanov A.A."/>
            <person name="Yang P."/>
            <person name="Yim S.H."/>
            <person name="Zhao X."/>
            <person name="Kasaikina M.V."/>
            <person name="Stoletzki N."/>
            <person name="Peng C."/>
            <person name="Polak P."/>
            <person name="Xiong Z."/>
            <person name="Kiezun A."/>
            <person name="Zhu Y."/>
            <person name="Chen Y."/>
            <person name="Kryukov G.V."/>
            <person name="Zhang Q."/>
            <person name="Peshkin L."/>
            <person name="Yang L."/>
            <person name="Bronson R.T."/>
            <person name="Buffenstein R."/>
            <person name="Wang B."/>
            <person name="Han C."/>
            <person name="Li Q."/>
            <person name="Chen L."/>
            <person name="Zhao W."/>
            <person name="Sunyaev S.R."/>
            <person name="Park T.J."/>
            <person name="Zhang G."/>
            <person name="Wang J."/>
            <person name="Gladyshev V.N."/>
        </authorList>
    </citation>
    <scope>NUCLEOTIDE SEQUENCE [LARGE SCALE GENOMIC DNA]</scope>
</reference>